<name>RS13_SINFN</name>
<feature type="chain" id="PRO_1000165633" description="Small ribosomal subunit protein uS13">
    <location>
        <begin position="1"/>
        <end position="122"/>
    </location>
</feature>
<feature type="region of interest" description="Disordered" evidence="2">
    <location>
        <begin position="99"/>
        <end position="122"/>
    </location>
</feature>
<proteinExistence type="inferred from homology"/>
<organism>
    <name type="scientific">Sinorhizobium fredii (strain NBRC 101917 / NGR234)</name>
    <dbReference type="NCBI Taxonomy" id="394"/>
    <lineage>
        <taxon>Bacteria</taxon>
        <taxon>Pseudomonadati</taxon>
        <taxon>Pseudomonadota</taxon>
        <taxon>Alphaproteobacteria</taxon>
        <taxon>Hyphomicrobiales</taxon>
        <taxon>Rhizobiaceae</taxon>
        <taxon>Sinorhizobium/Ensifer group</taxon>
        <taxon>Sinorhizobium</taxon>
    </lineage>
</organism>
<evidence type="ECO:0000255" key="1">
    <source>
        <dbReference type="HAMAP-Rule" id="MF_01315"/>
    </source>
</evidence>
<evidence type="ECO:0000256" key="2">
    <source>
        <dbReference type="SAM" id="MobiDB-lite"/>
    </source>
</evidence>
<evidence type="ECO:0000305" key="3"/>
<gene>
    <name evidence="1" type="primary">rpsM</name>
    <name type="ordered locus">NGR_c12120</name>
</gene>
<keyword id="KW-1185">Reference proteome</keyword>
<keyword id="KW-0687">Ribonucleoprotein</keyword>
<keyword id="KW-0689">Ribosomal protein</keyword>
<keyword id="KW-0694">RNA-binding</keyword>
<keyword id="KW-0699">rRNA-binding</keyword>
<keyword id="KW-0820">tRNA-binding</keyword>
<reference key="1">
    <citation type="journal article" date="2009" name="Appl. Environ. Microbiol.">
        <title>Rhizobium sp. strain NGR234 possesses a remarkable number of secretion systems.</title>
        <authorList>
            <person name="Schmeisser C."/>
            <person name="Liesegang H."/>
            <person name="Krysciak D."/>
            <person name="Bakkou N."/>
            <person name="Le Quere A."/>
            <person name="Wollherr A."/>
            <person name="Heinemeyer I."/>
            <person name="Morgenstern B."/>
            <person name="Pommerening-Roeser A."/>
            <person name="Flores M."/>
            <person name="Palacios R."/>
            <person name="Brenner S."/>
            <person name="Gottschalk G."/>
            <person name="Schmitz R.A."/>
            <person name="Broughton W.J."/>
            <person name="Perret X."/>
            <person name="Strittmatter A.W."/>
            <person name="Streit W.R."/>
        </authorList>
    </citation>
    <scope>NUCLEOTIDE SEQUENCE [LARGE SCALE GENOMIC DNA]</scope>
    <source>
        <strain>NBRC 101917 / NGR234</strain>
    </source>
</reference>
<accession>C3MB01</accession>
<dbReference type="EMBL" id="CP001389">
    <property type="protein sequence ID" value="ACP24994.1"/>
    <property type="molecule type" value="Genomic_DNA"/>
</dbReference>
<dbReference type="RefSeq" id="WP_012707772.1">
    <property type="nucleotide sequence ID" value="NC_012587.1"/>
</dbReference>
<dbReference type="RefSeq" id="YP_002825747.1">
    <property type="nucleotide sequence ID" value="NC_012587.1"/>
</dbReference>
<dbReference type="SMR" id="C3MB01"/>
<dbReference type="STRING" id="394.NGR_c12120"/>
<dbReference type="KEGG" id="rhi:NGR_c12120"/>
<dbReference type="PATRIC" id="fig|394.7.peg.4029"/>
<dbReference type="eggNOG" id="COG0099">
    <property type="taxonomic scope" value="Bacteria"/>
</dbReference>
<dbReference type="HOGENOM" id="CLU_103849_1_2_5"/>
<dbReference type="OrthoDB" id="9803610at2"/>
<dbReference type="Proteomes" id="UP000001054">
    <property type="component" value="Chromosome"/>
</dbReference>
<dbReference type="GO" id="GO:0005829">
    <property type="term" value="C:cytosol"/>
    <property type="evidence" value="ECO:0007669"/>
    <property type="project" value="TreeGrafter"/>
</dbReference>
<dbReference type="GO" id="GO:0015935">
    <property type="term" value="C:small ribosomal subunit"/>
    <property type="evidence" value="ECO:0007669"/>
    <property type="project" value="TreeGrafter"/>
</dbReference>
<dbReference type="GO" id="GO:0019843">
    <property type="term" value="F:rRNA binding"/>
    <property type="evidence" value="ECO:0007669"/>
    <property type="project" value="UniProtKB-UniRule"/>
</dbReference>
<dbReference type="GO" id="GO:0003735">
    <property type="term" value="F:structural constituent of ribosome"/>
    <property type="evidence" value="ECO:0007669"/>
    <property type="project" value="InterPro"/>
</dbReference>
<dbReference type="GO" id="GO:0000049">
    <property type="term" value="F:tRNA binding"/>
    <property type="evidence" value="ECO:0007669"/>
    <property type="project" value="UniProtKB-UniRule"/>
</dbReference>
<dbReference type="GO" id="GO:0006412">
    <property type="term" value="P:translation"/>
    <property type="evidence" value="ECO:0007669"/>
    <property type="project" value="UniProtKB-UniRule"/>
</dbReference>
<dbReference type="FunFam" id="1.10.8.50:FF:000001">
    <property type="entry name" value="30S ribosomal protein S13"/>
    <property type="match status" value="1"/>
</dbReference>
<dbReference type="FunFam" id="4.10.910.10:FF:000001">
    <property type="entry name" value="30S ribosomal protein S13"/>
    <property type="match status" value="1"/>
</dbReference>
<dbReference type="Gene3D" id="1.10.8.50">
    <property type="match status" value="1"/>
</dbReference>
<dbReference type="Gene3D" id="4.10.910.10">
    <property type="entry name" value="30s ribosomal protein s13, domain 2"/>
    <property type="match status" value="1"/>
</dbReference>
<dbReference type="HAMAP" id="MF_01315">
    <property type="entry name" value="Ribosomal_uS13"/>
    <property type="match status" value="1"/>
</dbReference>
<dbReference type="InterPro" id="IPR027437">
    <property type="entry name" value="Rbsml_uS13_C"/>
</dbReference>
<dbReference type="InterPro" id="IPR001892">
    <property type="entry name" value="Ribosomal_uS13"/>
</dbReference>
<dbReference type="InterPro" id="IPR010979">
    <property type="entry name" value="Ribosomal_uS13-like_H2TH"/>
</dbReference>
<dbReference type="InterPro" id="IPR019980">
    <property type="entry name" value="Ribosomal_uS13_bac-type"/>
</dbReference>
<dbReference type="InterPro" id="IPR018269">
    <property type="entry name" value="Ribosomal_uS13_CS"/>
</dbReference>
<dbReference type="NCBIfam" id="TIGR03631">
    <property type="entry name" value="uS13_bact"/>
    <property type="match status" value="1"/>
</dbReference>
<dbReference type="PANTHER" id="PTHR10871">
    <property type="entry name" value="30S RIBOSOMAL PROTEIN S13/40S RIBOSOMAL PROTEIN S18"/>
    <property type="match status" value="1"/>
</dbReference>
<dbReference type="PANTHER" id="PTHR10871:SF1">
    <property type="entry name" value="SMALL RIBOSOMAL SUBUNIT PROTEIN US13M"/>
    <property type="match status" value="1"/>
</dbReference>
<dbReference type="Pfam" id="PF00416">
    <property type="entry name" value="Ribosomal_S13"/>
    <property type="match status" value="1"/>
</dbReference>
<dbReference type="PIRSF" id="PIRSF002134">
    <property type="entry name" value="Ribosomal_S13"/>
    <property type="match status" value="1"/>
</dbReference>
<dbReference type="SUPFAM" id="SSF46946">
    <property type="entry name" value="S13-like H2TH domain"/>
    <property type="match status" value="1"/>
</dbReference>
<dbReference type="PROSITE" id="PS00646">
    <property type="entry name" value="RIBOSOMAL_S13_1"/>
    <property type="match status" value="1"/>
</dbReference>
<dbReference type="PROSITE" id="PS50159">
    <property type="entry name" value="RIBOSOMAL_S13_2"/>
    <property type="match status" value="1"/>
</dbReference>
<protein>
    <recommendedName>
        <fullName evidence="1">Small ribosomal subunit protein uS13</fullName>
    </recommendedName>
    <alternativeName>
        <fullName evidence="3">30S ribosomal protein S13</fullName>
    </alternativeName>
</protein>
<sequence>MARIAGVNIPTAKRVVIALTYIHGIGTKFAHEIVEKVGIPTDRRVHQLTDAEVLQIRETIDRDYQVEGDLRRETSMNIKRLMDLGCYRGLRHRRGLPVRGQRTHTNARTRKGPAKAIAGKKK</sequence>
<comment type="function">
    <text evidence="1">Located at the top of the head of the 30S subunit, it contacts several helices of the 16S rRNA. In the 70S ribosome it contacts the 23S rRNA (bridge B1a) and protein L5 of the 50S subunit (bridge B1b), connecting the 2 subunits; these bridges are implicated in subunit movement. Contacts the tRNAs in the A and P-sites.</text>
</comment>
<comment type="subunit">
    <text evidence="1">Part of the 30S ribosomal subunit. Forms a loose heterodimer with protein S19. Forms two bridges to the 50S subunit in the 70S ribosome.</text>
</comment>
<comment type="similarity">
    <text evidence="1">Belongs to the universal ribosomal protein uS13 family.</text>
</comment>